<comment type="function">
    <text evidence="6 7">Snake venom serine protease that interferes with the hemostatic system of the prey. It preferentially degrades the Bbeta chain (FGB) of fibrinogen, with minor effects on the Aalpha chain (FGA). It presents a lower ability to degrade fibrin clots than BpirSP41. It hydrolyzes chromogenic substrates S-2238 (used for testing thrombin activity), S-2222 (factor Xa), S-2266 (glandular kallikrein and factor XIa), S-2302 (plasma kallikrein, factor XIa and XIIa), and S-2251 (plasmin). It shows a decrease in the clotting time of human plasma in the presence of increasing doses of the enzyme. Its minimum coagulant dose (MCD) is 3.5 ug. It also promotes platelet aggregation in a concentration-dependent manner in the presence or absence of calcium. It also shows 20% inhibition of the hemolytic activity promoted by the complement pathways and possess only a minor role in the induction of edema and pain in rat.</text>
</comment>
<comment type="activity regulation">
    <text evidence="6">Inhibited by serine protease inhibitors PMSF, benzamidine, leupeptin and aprotinin, as well as by copper (Cu2+) and manganese (Mn2+) ions. Not inhibited by metalloprotease inhibitors EDTA, EGTA and 1,10-phenanthroline, as well as by barium (Ba2+) and calcium ion (Ca2+).</text>
</comment>
<comment type="biophysicochemical properties">
    <phDependence>
        <text evidence="6">Optimum pH is 6.0-10.5.</text>
    </phDependence>
    <temperatureDependence>
        <text evidence="6">Optimum temperature is 4-60 degrees Celsius.</text>
    </temperatureDependence>
</comment>
<comment type="subunit">
    <text evidence="1">Monomer.</text>
</comment>
<comment type="subcellular location">
    <subcellularLocation>
        <location>Secreted</location>
    </subcellularLocation>
</comment>
<comment type="tissue specificity">
    <text>Expressed by the venom gland.</text>
</comment>
<comment type="PTM">
    <text evidence="6">N-glycosylated.</text>
</comment>
<comment type="mass spectrometry" mass="27121.0" method="MALDI" evidence="6"/>
<comment type="miscellaneous">
    <text evidence="8">Acidic enzyme (pI is 4.7).</text>
</comment>
<comment type="miscellaneous">
    <text evidence="8">Negative results: does not degrade the gamma chain of fibrinogen (FGG).</text>
</comment>
<comment type="similarity">
    <text evidence="3">Belongs to the peptidase S1 family. Snake venom subfamily.</text>
</comment>
<protein>
    <recommendedName>
        <fullName>Thrombin-like enzyme BpirSP27</fullName>
        <shortName>SVTLE</shortName>
        <ecNumber>3.4.21.-</ecNumber>
    </recommendedName>
    <alternativeName>
        <fullName>Fibrinogen-clotting enzyme</fullName>
    </alternativeName>
    <alternativeName>
        <fullName>Snake venom serine protease</fullName>
        <shortName>SVSP</shortName>
    </alternativeName>
</protein>
<organism>
    <name type="scientific">Bothrops pirajai</name>
    <name type="common">Piraja's lancehead</name>
    <dbReference type="NCBI Taxonomy" id="113192"/>
    <lineage>
        <taxon>Eukaryota</taxon>
        <taxon>Metazoa</taxon>
        <taxon>Chordata</taxon>
        <taxon>Craniata</taxon>
        <taxon>Vertebrata</taxon>
        <taxon>Euteleostomi</taxon>
        <taxon>Lepidosauria</taxon>
        <taxon>Squamata</taxon>
        <taxon>Bifurcata</taxon>
        <taxon>Unidentata</taxon>
        <taxon>Episquamata</taxon>
        <taxon>Toxicofera</taxon>
        <taxon>Serpentes</taxon>
        <taxon>Colubroidea</taxon>
        <taxon>Viperidae</taxon>
        <taxon>Crotalinae</taxon>
        <taxon>Bothrops</taxon>
    </lineage>
</organism>
<dbReference type="EC" id="3.4.21.-"/>
<dbReference type="SMR" id="P0DL26"/>
<dbReference type="GO" id="GO:0005576">
    <property type="term" value="C:extracellular region"/>
    <property type="evidence" value="ECO:0007669"/>
    <property type="project" value="UniProtKB-SubCell"/>
</dbReference>
<dbReference type="GO" id="GO:0004252">
    <property type="term" value="F:serine-type endopeptidase activity"/>
    <property type="evidence" value="ECO:0007669"/>
    <property type="project" value="InterPro"/>
</dbReference>
<dbReference type="GO" id="GO:0090729">
    <property type="term" value="F:toxin activity"/>
    <property type="evidence" value="ECO:0007669"/>
    <property type="project" value="UniProtKB-KW"/>
</dbReference>
<dbReference type="GO" id="GO:0006508">
    <property type="term" value="P:proteolysis"/>
    <property type="evidence" value="ECO:0007669"/>
    <property type="project" value="UniProtKB-KW"/>
</dbReference>
<dbReference type="Gene3D" id="2.40.10.10">
    <property type="entry name" value="Trypsin-like serine proteases"/>
    <property type="match status" value="1"/>
</dbReference>
<dbReference type="InterPro" id="IPR009003">
    <property type="entry name" value="Peptidase_S1_PA"/>
</dbReference>
<dbReference type="InterPro" id="IPR043504">
    <property type="entry name" value="Peptidase_S1_PA_chymotrypsin"/>
</dbReference>
<dbReference type="InterPro" id="IPR001254">
    <property type="entry name" value="Trypsin_dom"/>
</dbReference>
<dbReference type="InterPro" id="IPR018114">
    <property type="entry name" value="TRYPSIN_HIS"/>
</dbReference>
<dbReference type="Pfam" id="PF00089">
    <property type="entry name" value="Trypsin"/>
    <property type="match status" value="1"/>
</dbReference>
<dbReference type="SUPFAM" id="SSF50494">
    <property type="entry name" value="Trypsin-like serine proteases"/>
    <property type="match status" value="1"/>
</dbReference>
<dbReference type="PROSITE" id="PS00134">
    <property type="entry name" value="TRYPSIN_HIS"/>
    <property type="match status" value="1"/>
</dbReference>
<accession>P0DL26</accession>
<evidence type="ECO:0000250" key="1"/>
<evidence type="ECO:0000255" key="2"/>
<evidence type="ECO:0000255" key="3">
    <source>
        <dbReference type="PROSITE-ProRule" id="PRU00274"/>
    </source>
</evidence>
<evidence type="ECO:0000255" key="4">
    <source>
        <dbReference type="PROSITE-ProRule" id="PRU10078"/>
    </source>
</evidence>
<evidence type="ECO:0000255" key="5">
    <source>
        <dbReference type="PROSITE-ProRule" id="PRU10079"/>
    </source>
</evidence>
<evidence type="ECO:0000269" key="6">
    <source>
    </source>
</evidence>
<evidence type="ECO:0000269" key="7">
    <source>
    </source>
</evidence>
<evidence type="ECO:0000305" key="8">
    <source>
    </source>
</evidence>
<keyword id="KW-1204">Blood coagulation cascade activating toxin</keyword>
<keyword id="KW-1216">Complement system impairing toxin</keyword>
<keyword id="KW-0903">Direct protein sequencing</keyword>
<keyword id="KW-1015">Disulfide bond</keyword>
<keyword id="KW-1205">Fibrinolytic toxin</keyword>
<keyword id="KW-0325">Glycoprotein</keyword>
<keyword id="KW-1199">Hemostasis impairing toxin</keyword>
<keyword id="KW-0378">Hydrolase</keyword>
<keyword id="KW-1202">Platelet aggregation activating toxin</keyword>
<keyword id="KW-0645">Protease</keyword>
<keyword id="KW-0964">Secreted</keyword>
<keyword id="KW-0720">Serine protease</keyword>
<keyword id="KW-0800">Toxin</keyword>
<reference key="1">
    <citation type="journal article" date="2012" name="Biochimie">
        <title>Biochemical characterization and comparative analysis of two distinct serine proteases from Bothrops pirajai snake venom.</title>
        <authorList>
            <person name="Menaldo D.L."/>
            <person name="Bernardes C.P."/>
            <person name="Santos-Filho N.A."/>
            <person name="Moura Lde A."/>
            <person name="Fuly A.L."/>
            <person name="Arantes E.C."/>
            <person name="Sampaio S.V."/>
        </authorList>
    </citation>
    <scope>PROTEIN SEQUENCE</scope>
    <scope>FUNCTION</scope>
    <scope>BIOPHYSICOCHEMICAL PROPERTIES</scope>
    <scope>ACTIVITY REGULATION</scope>
    <scope>MASS SPECTROMETRY</scope>
    <source>
        <tissue>Venom</tissue>
    </source>
</reference>
<reference key="2">
    <citation type="journal article" date="2013" name="Int. Immunopharmacol.">
        <title>Effects of two serine proteases from Bothrops pirajai snake venom on the complement system and the inflammatory response.</title>
        <authorList>
            <person name="Menaldo D.L."/>
            <person name="Bernardes C.P."/>
            <person name="Pereira J.C."/>
            <person name="Silveira D.S."/>
            <person name="Mamede C.C."/>
            <person name="Stanziola L."/>
            <person name="de Oliveira F."/>
            <person name="Pereira-Crott L.S."/>
            <person name="Faccioli L.H."/>
            <person name="Sampaio S.V."/>
        </authorList>
    </citation>
    <scope>FUNCTION</scope>
    <scope>BIOASSAY</scope>
</reference>
<name>VSP27_BOTPI</name>
<sequence length="50" mass="5534">VVGGDECNINEHRSLVAIFNSTGFFCSGILLNQEWVLTASHCDSTNFQMK</sequence>
<feature type="chain" id="PRO_0000422276" description="Thrombin-like enzyme BpirSP27">
    <location>
        <begin position="1"/>
        <end position="50" status="greater than"/>
    </location>
</feature>
<feature type="domain" description="Peptidase S1" evidence="3">
    <location>
        <begin position="1"/>
        <end position="50" status="greater than"/>
    </location>
</feature>
<feature type="active site" description="Charge relay system" evidence="3 4 5">
    <location>
        <position position="41"/>
    </location>
</feature>
<feature type="glycosylation site" description="N-linked (GlcNAc...) asparagine" evidence="2">
    <location>
        <position position="20"/>
    </location>
</feature>
<feature type="disulfide bond" evidence="3">
    <location>
        <begin position="7"/>
        <end status="unknown"/>
    </location>
</feature>
<feature type="disulfide bond" evidence="3">
    <location>
        <begin position="26"/>
        <end position="42"/>
    </location>
</feature>
<feature type="non-terminal residue">
    <location>
        <position position="50"/>
    </location>
</feature>
<proteinExistence type="evidence at protein level"/>